<evidence type="ECO:0000250" key="1"/>
<evidence type="ECO:0000256" key="2">
    <source>
        <dbReference type="SAM" id="MobiDB-lite"/>
    </source>
</evidence>
<evidence type="ECO:0000305" key="3"/>
<feature type="chain" id="PRO_0000341969" description="Putative heat shock protein HSP 90-alpha A4">
    <location>
        <begin position="1"/>
        <end position="418"/>
    </location>
</feature>
<feature type="region of interest" description="Disordered" evidence="2">
    <location>
        <begin position="255"/>
        <end position="289"/>
    </location>
</feature>
<feature type="region of interest" description="Disordered" evidence="2">
    <location>
        <begin position="383"/>
        <end position="418"/>
    </location>
</feature>
<feature type="compositionally biased region" description="Basic and acidic residues" evidence="2">
    <location>
        <begin position="265"/>
        <end position="274"/>
    </location>
</feature>
<feature type="binding site" evidence="1">
    <location>
        <position position="33"/>
    </location>
    <ligand>
        <name>ATP</name>
        <dbReference type="ChEBI" id="CHEBI:30616"/>
    </ligand>
</feature>
<feature type="binding site" evidence="1">
    <location>
        <position position="52"/>
    </location>
    <ligand>
        <name>ATP</name>
        <dbReference type="ChEBI" id="CHEBI:30616"/>
    </ligand>
</feature>
<feature type="binding site" evidence="1">
    <location>
        <position position="78"/>
    </location>
    <ligand>
        <name>ATP</name>
        <dbReference type="ChEBI" id="CHEBI:30616"/>
    </ligand>
</feature>
<feature type="binding site" evidence="1">
    <location>
        <position position="204"/>
    </location>
    <ligand>
        <name>ATP</name>
        <dbReference type="ChEBI" id="CHEBI:30616"/>
    </ligand>
</feature>
<sequence>MESLTDPSKLDSGKEPHISLIPNKQDRTLTIVDTGIGMTKADLINNLGTITKSETKVFMEVLQAGADISMIGQFSVGFYSAYSVAEKVTVITKHNNDEQYAWESSLRGSFTEYREFYKSLTINWEDYLAVKHFSVEGQLEFRAFLFVPRLAPFELLETRKKKNKIKLSARRDLIMDNCEELIPEYLNFIRGVVDSEDLPLNIFRETKDQVANSTIVQRLWKHGLEVIYTIEPIDEYCVQQLKEFEGKTLVSVTKEDLELPEDEEEKKKQEEGKQKTKQKKNQSLRTSAKSTYGWTANMERIMKAQALRDNSTTGYMAAKKHLEINPDHSFIDTLRQKAETDKNDKSVKDLVILLYETALLSSDFGLEGPQTHANRIYRMNKLGLGTDEDDPTADDTSAAVTEEMPPLEGDDDTSRMEK</sequence>
<keyword id="KW-0067">ATP-binding</keyword>
<keyword id="KW-0143">Chaperone</keyword>
<keyword id="KW-0963">Cytoplasm</keyword>
<keyword id="KW-0547">Nucleotide-binding</keyword>
<keyword id="KW-1267">Proteomics identification</keyword>
<keyword id="KW-1185">Reference proteome</keyword>
<keyword id="KW-0346">Stress response</keyword>
<dbReference type="EMBL" id="AY956760">
    <property type="protein sequence ID" value="AAX38247.1"/>
    <property type="molecule type" value="mRNA"/>
</dbReference>
<dbReference type="SMR" id="Q58FG1"/>
<dbReference type="FunCoup" id="Q58FG1">
    <property type="interactions" value="429"/>
</dbReference>
<dbReference type="IntAct" id="Q58FG1">
    <property type="interactions" value="88"/>
</dbReference>
<dbReference type="BindingDB" id="Q58FG1"/>
<dbReference type="GlyGen" id="Q58FG1">
    <property type="glycosylation" value="2 sites, 1 O-linked glycan (2 sites)"/>
</dbReference>
<dbReference type="iPTMnet" id="Q58FG1"/>
<dbReference type="PhosphoSitePlus" id="Q58FG1"/>
<dbReference type="SwissPalm" id="Q58FG1"/>
<dbReference type="BioMuta" id="HGNC:5255"/>
<dbReference type="jPOST" id="Q58FG1"/>
<dbReference type="MassIVE" id="Q58FG1"/>
<dbReference type="ProteomicsDB" id="62625"/>
<dbReference type="Pumba" id="Q58FG1"/>
<dbReference type="AGR" id="HGNC:5255"/>
<dbReference type="GeneCards" id="HSP90AA4P"/>
<dbReference type="HGNC" id="HGNC:5255">
    <property type="gene designation" value="HSP90AA4P"/>
</dbReference>
<dbReference type="neXtProt" id="NX_Q58FG1"/>
<dbReference type="InParanoid" id="Q58FG1"/>
<dbReference type="PAN-GO" id="Q58FG1">
    <property type="GO annotations" value="13 GO annotations based on evolutionary models"/>
</dbReference>
<dbReference type="PhylomeDB" id="Q58FG1"/>
<dbReference type="PathwayCommons" id="Q58FG1"/>
<dbReference type="SignaLink" id="Q58FG1"/>
<dbReference type="Pharos" id="Q58FG1">
    <property type="development level" value="Tdark"/>
</dbReference>
<dbReference type="Proteomes" id="UP000005640">
    <property type="component" value="Unplaced"/>
</dbReference>
<dbReference type="RNAct" id="Q58FG1">
    <property type="molecule type" value="protein"/>
</dbReference>
<dbReference type="GO" id="GO:0005737">
    <property type="term" value="C:cytoplasm"/>
    <property type="evidence" value="ECO:0007669"/>
    <property type="project" value="UniProtKB-SubCell"/>
</dbReference>
<dbReference type="GO" id="GO:0005524">
    <property type="term" value="F:ATP binding"/>
    <property type="evidence" value="ECO:0007669"/>
    <property type="project" value="UniProtKB-KW"/>
</dbReference>
<dbReference type="GO" id="GO:0016887">
    <property type="term" value="F:ATP hydrolysis activity"/>
    <property type="evidence" value="ECO:0007669"/>
    <property type="project" value="InterPro"/>
</dbReference>
<dbReference type="GO" id="GO:0140662">
    <property type="term" value="F:ATP-dependent protein folding chaperone"/>
    <property type="evidence" value="ECO:0007669"/>
    <property type="project" value="InterPro"/>
</dbReference>
<dbReference type="GO" id="GO:0051082">
    <property type="term" value="F:unfolded protein binding"/>
    <property type="evidence" value="ECO:0007669"/>
    <property type="project" value="InterPro"/>
</dbReference>
<dbReference type="FunFam" id="3.30.565.10:FF:000357">
    <property type="entry name" value="Heat shock protein HSP 90-beta"/>
    <property type="match status" value="1"/>
</dbReference>
<dbReference type="FunFam" id="1.20.120.790:FF:000011">
    <property type="entry name" value="Putative heat shock protein HSP 90-alpha A4"/>
    <property type="match status" value="1"/>
</dbReference>
<dbReference type="Gene3D" id="3.40.50.11260">
    <property type="match status" value="1"/>
</dbReference>
<dbReference type="Gene3D" id="1.20.120.790">
    <property type="entry name" value="Heat shock protein 90, C-terminal domain"/>
    <property type="match status" value="1"/>
</dbReference>
<dbReference type="Gene3D" id="3.30.565.10">
    <property type="entry name" value="Histidine kinase-like ATPase, C-terminal domain"/>
    <property type="match status" value="1"/>
</dbReference>
<dbReference type="InterPro" id="IPR036890">
    <property type="entry name" value="HATPase_C_sf"/>
</dbReference>
<dbReference type="InterPro" id="IPR037196">
    <property type="entry name" value="HSP90_C"/>
</dbReference>
<dbReference type="InterPro" id="IPR001404">
    <property type="entry name" value="Hsp90_fam"/>
</dbReference>
<dbReference type="InterPro" id="IPR020575">
    <property type="entry name" value="Hsp90_N"/>
</dbReference>
<dbReference type="InterPro" id="IPR020568">
    <property type="entry name" value="Ribosomal_Su5_D2-typ_SF"/>
</dbReference>
<dbReference type="PANTHER" id="PTHR11528">
    <property type="entry name" value="HEAT SHOCK PROTEIN 90 FAMILY MEMBER"/>
    <property type="match status" value="1"/>
</dbReference>
<dbReference type="Pfam" id="PF13589">
    <property type="entry name" value="HATPase_c_3"/>
    <property type="match status" value="1"/>
</dbReference>
<dbReference type="Pfam" id="PF00183">
    <property type="entry name" value="HSP90"/>
    <property type="match status" value="3"/>
</dbReference>
<dbReference type="PRINTS" id="PR00775">
    <property type="entry name" value="HEATSHOCK90"/>
</dbReference>
<dbReference type="SUPFAM" id="SSF55874">
    <property type="entry name" value="ATPase domain of HSP90 chaperone/DNA topoisomerase II/histidine kinase"/>
    <property type="match status" value="1"/>
</dbReference>
<dbReference type="SUPFAM" id="SSF110942">
    <property type="entry name" value="HSP90 C-terminal domain"/>
    <property type="match status" value="1"/>
</dbReference>
<dbReference type="SUPFAM" id="SSF54211">
    <property type="entry name" value="Ribosomal protein S5 domain 2-like"/>
    <property type="match status" value="1"/>
</dbReference>
<comment type="function">
    <text evidence="1">Putative molecular chaperone that may promote the maturation, structural maintenance and proper regulation of specific target proteins.</text>
</comment>
<comment type="subunit">
    <text evidence="1">Homodimer.</text>
</comment>
<comment type="interaction">
    <interactant intactId="EBI-6916562">
        <id>Q58FG1</id>
    </interactant>
    <interactant intactId="EBI-2828531">
        <id>Q5TFE4</id>
        <label>NT5DC1</label>
    </interactant>
    <organismsDiffer>false</organismsDiffer>
    <experiments>2</experiments>
</comment>
<comment type="subcellular location">
    <subcellularLocation>
        <location evidence="1">Cytoplasm</location>
    </subcellularLocation>
</comment>
<comment type="similarity">
    <text evidence="3">Belongs to the heat shock protein 90 family.</text>
</comment>
<comment type="caution">
    <text evidence="3">Could be the product of a pseudogene.</text>
</comment>
<name>HS904_HUMAN</name>
<organism>
    <name type="scientific">Homo sapiens</name>
    <name type="common">Human</name>
    <dbReference type="NCBI Taxonomy" id="9606"/>
    <lineage>
        <taxon>Eukaryota</taxon>
        <taxon>Metazoa</taxon>
        <taxon>Chordata</taxon>
        <taxon>Craniata</taxon>
        <taxon>Vertebrata</taxon>
        <taxon>Euteleostomi</taxon>
        <taxon>Mammalia</taxon>
        <taxon>Eutheria</taxon>
        <taxon>Euarchontoglires</taxon>
        <taxon>Primates</taxon>
        <taxon>Haplorrhini</taxon>
        <taxon>Catarrhini</taxon>
        <taxon>Hominidae</taxon>
        <taxon>Homo</taxon>
    </lineage>
</organism>
<accession>Q58FG1</accession>
<proteinExistence type="uncertain"/>
<gene>
    <name type="primary">HSP90AA4P</name>
    <name type="synonym">HSP90AD</name>
    <name type="synonym">HSPCAL2</name>
</gene>
<protein>
    <recommendedName>
        <fullName>Putative heat shock protein HSP 90-alpha A4</fullName>
    </recommendedName>
    <alternativeName>
        <fullName>Heat shock 90 kDa protein 1 alpha-like 2</fullName>
    </alternativeName>
    <alternativeName>
        <fullName>Heat shock protein 90-alpha D</fullName>
        <shortName>Heat shock protein 90Ad</shortName>
    </alternativeName>
</protein>
<reference key="1">
    <citation type="journal article" date="2005" name="Genomics">
        <title>The HSP90 family of genes in the human genome: insights into their divergence and evolution.</title>
        <authorList>
            <person name="Chen B."/>
            <person name="Piel W.H."/>
            <person name="Gui L."/>
            <person name="Bruford E."/>
            <person name="Monteiro A."/>
        </authorList>
    </citation>
    <scope>NUCLEOTIDE SEQUENCE [MRNA]</scope>
</reference>